<comment type="function">
    <text evidence="1">Catalyzes the rearrangement of 1-deoxy-D-xylulose 5-phosphate (DXP) to produce the thiazole phosphate moiety of thiamine. Sulfur is provided by the thiocarboxylate moiety of the carrier protein ThiS. In vitro, sulfur can be provided by H(2)S.</text>
</comment>
<comment type="catalytic activity">
    <reaction evidence="1">
        <text>[ThiS sulfur-carrier protein]-C-terminal-Gly-aminoethanethioate + 2-iminoacetate + 1-deoxy-D-xylulose 5-phosphate = [ThiS sulfur-carrier protein]-C-terminal Gly-Gly + 2-[(2R,5Z)-2-carboxy-4-methylthiazol-5(2H)-ylidene]ethyl phosphate + 2 H2O + H(+)</text>
        <dbReference type="Rhea" id="RHEA:26297"/>
        <dbReference type="Rhea" id="RHEA-COMP:12909"/>
        <dbReference type="Rhea" id="RHEA-COMP:19908"/>
        <dbReference type="ChEBI" id="CHEBI:15377"/>
        <dbReference type="ChEBI" id="CHEBI:15378"/>
        <dbReference type="ChEBI" id="CHEBI:57792"/>
        <dbReference type="ChEBI" id="CHEBI:62899"/>
        <dbReference type="ChEBI" id="CHEBI:77846"/>
        <dbReference type="ChEBI" id="CHEBI:90778"/>
        <dbReference type="ChEBI" id="CHEBI:232372"/>
        <dbReference type="EC" id="2.8.1.10"/>
    </reaction>
</comment>
<comment type="pathway">
    <text evidence="1">Cofactor biosynthesis; thiamine diphosphate biosynthesis.</text>
</comment>
<comment type="subunit">
    <text evidence="1">Homotetramer. Forms heterodimers with either ThiH or ThiS.</text>
</comment>
<comment type="subcellular location">
    <subcellularLocation>
        <location evidence="1">Cytoplasm</location>
    </subcellularLocation>
</comment>
<comment type="similarity">
    <text evidence="1">Belongs to the ThiG family.</text>
</comment>
<accession>Q3SPS2</accession>
<proteinExistence type="inferred from homology"/>
<organism>
    <name type="scientific">Nitrobacter winogradskyi (strain ATCC 25391 / DSM 10237 / CIP 104748 / NCIMB 11846 / Nb-255)</name>
    <dbReference type="NCBI Taxonomy" id="323098"/>
    <lineage>
        <taxon>Bacteria</taxon>
        <taxon>Pseudomonadati</taxon>
        <taxon>Pseudomonadota</taxon>
        <taxon>Alphaproteobacteria</taxon>
        <taxon>Hyphomicrobiales</taxon>
        <taxon>Nitrobacteraceae</taxon>
        <taxon>Nitrobacter</taxon>
    </lineage>
</organism>
<reference key="1">
    <citation type="journal article" date="2006" name="Appl. Environ. Microbiol.">
        <title>Genome sequence of the chemolithoautotrophic nitrite-oxidizing bacterium Nitrobacter winogradskyi Nb-255.</title>
        <authorList>
            <person name="Starkenburg S.R."/>
            <person name="Chain P.S.G."/>
            <person name="Sayavedra-Soto L.A."/>
            <person name="Hauser L."/>
            <person name="Land M.L."/>
            <person name="Larimer F.W."/>
            <person name="Malfatti S.A."/>
            <person name="Klotz M.G."/>
            <person name="Bottomley P.J."/>
            <person name="Arp D.J."/>
            <person name="Hickey W.J."/>
        </authorList>
    </citation>
    <scope>NUCLEOTIDE SEQUENCE [LARGE SCALE GENOMIC DNA]</scope>
    <source>
        <strain>ATCC 25391 / DSM 10237 / CIP 104748 / NCIMB 11846 / Nb-255</strain>
    </source>
</reference>
<sequence length="260" mass="27652">MVSFYDREFSSRLLIGTALYPSPKIMQDAIRAAGSQIVTVSLRRETAGGKTGDAFWSLIRELDVTVLPNTAGCKTVREAVTTAKLARELFGTSWIKLEVIADNDTLQPDVVGLVEAAAILIRDGFDVFPYCTEDLGVAMRLVEAGCKVVMPWAAPIGSAKGITNRDALKLLRERLPDVTLVVDAGLGAPSHAAQACELGYDAVLLNTAVAKAADPVVMAGAFRLAVEAGRNAYEAGLMEARDFASPSTPVVGTPFWHAVS</sequence>
<dbReference type="EC" id="2.8.1.10" evidence="1"/>
<dbReference type="EMBL" id="CP000115">
    <property type="protein sequence ID" value="ABA05719.1"/>
    <property type="molecule type" value="Genomic_DNA"/>
</dbReference>
<dbReference type="RefSeq" id="WP_011315674.1">
    <property type="nucleotide sequence ID" value="NC_007406.1"/>
</dbReference>
<dbReference type="SMR" id="Q3SPS2"/>
<dbReference type="STRING" id="323098.Nwi_2466"/>
<dbReference type="KEGG" id="nwi:Nwi_2466"/>
<dbReference type="eggNOG" id="COG2022">
    <property type="taxonomic scope" value="Bacteria"/>
</dbReference>
<dbReference type="HOGENOM" id="CLU_062233_1_0_5"/>
<dbReference type="OrthoDB" id="9805935at2"/>
<dbReference type="UniPathway" id="UPA00060"/>
<dbReference type="Proteomes" id="UP000002531">
    <property type="component" value="Chromosome"/>
</dbReference>
<dbReference type="GO" id="GO:0005737">
    <property type="term" value="C:cytoplasm"/>
    <property type="evidence" value="ECO:0007669"/>
    <property type="project" value="UniProtKB-SubCell"/>
</dbReference>
<dbReference type="GO" id="GO:1990107">
    <property type="term" value="F:thiazole synthase activity"/>
    <property type="evidence" value="ECO:0007669"/>
    <property type="project" value="UniProtKB-EC"/>
</dbReference>
<dbReference type="GO" id="GO:0009229">
    <property type="term" value="P:thiamine diphosphate biosynthetic process"/>
    <property type="evidence" value="ECO:0007669"/>
    <property type="project" value="UniProtKB-UniRule"/>
</dbReference>
<dbReference type="CDD" id="cd04728">
    <property type="entry name" value="ThiG"/>
    <property type="match status" value="1"/>
</dbReference>
<dbReference type="Gene3D" id="3.20.20.70">
    <property type="entry name" value="Aldolase class I"/>
    <property type="match status" value="1"/>
</dbReference>
<dbReference type="HAMAP" id="MF_00443">
    <property type="entry name" value="ThiG"/>
    <property type="match status" value="1"/>
</dbReference>
<dbReference type="InterPro" id="IPR013785">
    <property type="entry name" value="Aldolase_TIM"/>
</dbReference>
<dbReference type="InterPro" id="IPR033983">
    <property type="entry name" value="Thiazole_synthase_ThiG"/>
</dbReference>
<dbReference type="InterPro" id="IPR008867">
    <property type="entry name" value="ThiG"/>
</dbReference>
<dbReference type="PANTHER" id="PTHR34266">
    <property type="entry name" value="THIAZOLE SYNTHASE"/>
    <property type="match status" value="1"/>
</dbReference>
<dbReference type="PANTHER" id="PTHR34266:SF2">
    <property type="entry name" value="THIAZOLE SYNTHASE"/>
    <property type="match status" value="1"/>
</dbReference>
<dbReference type="Pfam" id="PF05690">
    <property type="entry name" value="ThiG"/>
    <property type="match status" value="1"/>
</dbReference>
<dbReference type="SUPFAM" id="SSF110399">
    <property type="entry name" value="ThiG-like"/>
    <property type="match status" value="1"/>
</dbReference>
<feature type="chain" id="PRO_0000236346" description="Thiazole synthase">
    <location>
        <begin position="1"/>
        <end position="260"/>
    </location>
</feature>
<feature type="active site" description="Schiff-base intermediate with DXP" evidence="1">
    <location>
        <position position="96"/>
    </location>
</feature>
<feature type="binding site" evidence="1">
    <location>
        <position position="157"/>
    </location>
    <ligand>
        <name>1-deoxy-D-xylulose 5-phosphate</name>
        <dbReference type="ChEBI" id="CHEBI:57792"/>
    </ligand>
</feature>
<feature type="binding site" evidence="1">
    <location>
        <begin position="184"/>
        <end position="185"/>
    </location>
    <ligand>
        <name>1-deoxy-D-xylulose 5-phosphate</name>
        <dbReference type="ChEBI" id="CHEBI:57792"/>
    </ligand>
</feature>
<feature type="binding site" evidence="1">
    <location>
        <begin position="206"/>
        <end position="207"/>
    </location>
    <ligand>
        <name>1-deoxy-D-xylulose 5-phosphate</name>
        <dbReference type="ChEBI" id="CHEBI:57792"/>
    </ligand>
</feature>
<evidence type="ECO:0000255" key="1">
    <source>
        <dbReference type="HAMAP-Rule" id="MF_00443"/>
    </source>
</evidence>
<name>THIG_NITWN</name>
<protein>
    <recommendedName>
        <fullName evidence="1">Thiazole synthase</fullName>
        <ecNumber evidence="1">2.8.1.10</ecNumber>
    </recommendedName>
</protein>
<keyword id="KW-0963">Cytoplasm</keyword>
<keyword id="KW-1185">Reference proteome</keyword>
<keyword id="KW-0704">Schiff base</keyword>
<keyword id="KW-0784">Thiamine biosynthesis</keyword>
<keyword id="KW-0808">Transferase</keyword>
<gene>
    <name evidence="1" type="primary">thiG</name>
    <name type="ordered locus">Nwi_2466</name>
</gene>